<organism>
    <name type="scientific">Chlamydia trachomatis serovar D (strain ATCC VR-885 / DSM 19411 / UW-3/Cx)</name>
    <dbReference type="NCBI Taxonomy" id="272561"/>
    <lineage>
        <taxon>Bacteria</taxon>
        <taxon>Pseudomonadati</taxon>
        <taxon>Chlamydiota</taxon>
        <taxon>Chlamydiia</taxon>
        <taxon>Chlamydiales</taxon>
        <taxon>Chlamydiaceae</taxon>
        <taxon>Chlamydia/Chlamydophila group</taxon>
        <taxon>Chlamydia</taxon>
    </lineage>
</organism>
<keyword id="KW-1003">Cell membrane</keyword>
<keyword id="KW-0444">Lipid biosynthesis</keyword>
<keyword id="KW-0443">Lipid metabolism</keyword>
<keyword id="KW-0472">Membrane</keyword>
<keyword id="KW-0548">Nucleotidyltransferase</keyword>
<keyword id="KW-0594">Phospholipid biosynthesis</keyword>
<keyword id="KW-1208">Phospholipid metabolism</keyword>
<keyword id="KW-1185">Reference proteome</keyword>
<keyword id="KW-0808">Transferase</keyword>
<keyword id="KW-0812">Transmembrane</keyword>
<keyword id="KW-1133">Transmembrane helix</keyword>
<dbReference type="EC" id="2.7.7.41"/>
<dbReference type="EMBL" id="AE001273">
    <property type="protein sequence ID" value="AAC68051.1"/>
    <property type="molecule type" value="Genomic_DNA"/>
</dbReference>
<dbReference type="PIR" id="F71512">
    <property type="entry name" value="F71512"/>
</dbReference>
<dbReference type="RefSeq" id="NP_219964.1">
    <property type="nucleotide sequence ID" value="NC_000117.1"/>
</dbReference>
<dbReference type="RefSeq" id="WP_009871809.1">
    <property type="nucleotide sequence ID" value="NC_000117.1"/>
</dbReference>
<dbReference type="SMR" id="O84457"/>
<dbReference type="FunCoup" id="O84457">
    <property type="interactions" value="262"/>
</dbReference>
<dbReference type="STRING" id="272561.CT_451"/>
<dbReference type="EnsemblBacteria" id="AAC68051">
    <property type="protein sequence ID" value="AAC68051"/>
    <property type="gene ID" value="CT_451"/>
</dbReference>
<dbReference type="GeneID" id="884225"/>
<dbReference type="KEGG" id="ctr:CT_451"/>
<dbReference type="PATRIC" id="fig|272561.5.peg.488"/>
<dbReference type="HOGENOM" id="CLU_037294_3_3_0"/>
<dbReference type="InParanoid" id="O84457"/>
<dbReference type="OrthoDB" id="9799199at2"/>
<dbReference type="UniPathway" id="UPA00557">
    <property type="reaction ID" value="UER00614"/>
</dbReference>
<dbReference type="Proteomes" id="UP000000431">
    <property type="component" value="Chromosome"/>
</dbReference>
<dbReference type="GO" id="GO:0005886">
    <property type="term" value="C:plasma membrane"/>
    <property type="evidence" value="ECO:0000318"/>
    <property type="project" value="GO_Central"/>
</dbReference>
<dbReference type="GO" id="GO:0004605">
    <property type="term" value="F:phosphatidate cytidylyltransferase activity"/>
    <property type="evidence" value="ECO:0000318"/>
    <property type="project" value="GO_Central"/>
</dbReference>
<dbReference type="GO" id="GO:0016024">
    <property type="term" value="P:CDP-diacylglycerol biosynthetic process"/>
    <property type="evidence" value="ECO:0000318"/>
    <property type="project" value="GO_Central"/>
</dbReference>
<dbReference type="PANTHER" id="PTHR46382">
    <property type="entry name" value="PHOSPHATIDATE CYTIDYLYLTRANSFERASE"/>
    <property type="match status" value="1"/>
</dbReference>
<dbReference type="PANTHER" id="PTHR46382:SF1">
    <property type="entry name" value="PHOSPHATIDATE CYTIDYLYLTRANSFERASE"/>
    <property type="match status" value="1"/>
</dbReference>
<dbReference type="Pfam" id="PF01148">
    <property type="entry name" value="CTP_transf_1"/>
    <property type="match status" value="1"/>
</dbReference>
<gene>
    <name type="primary">cdsA</name>
    <name type="ordered locus">CT_451</name>
</gene>
<sequence length="305" mass="33805">MFDSDHNSIFQSDLCQRLVVHSILLTFLVILLCTSLYPSSAFIVGLLSSACAALGTYEMGAMVRIKFPFSFTRYSALGSAIFIALTCLTARCKMCFPEHIDLLPWFFLFFWTIRLVFKSRHYKLGPIGSTGLALFCMLYVSVPIRLFLHILYGFVHTDTPFVGIWWAIFLIATTKSSDIFGYFFGKAFGKKRIAPVISPNKTVVGFIAGCCGSILVSLLFYSHLPKAFADQIAVPWILIALGTVLGVSGFFGDIIESTFKRDAQIKNSSDLESIGGMLDVLDSLLLSTPIVYAILLITQNRTFLG</sequence>
<name>CDSA_CHLTR</name>
<protein>
    <recommendedName>
        <fullName>Phosphatidate cytidylyltransferase</fullName>
        <ecNumber>2.7.7.41</ecNumber>
    </recommendedName>
    <alternativeName>
        <fullName>CDP-DAG synthase</fullName>
    </alternativeName>
    <alternativeName>
        <fullName>CDP-DG synthase</fullName>
    </alternativeName>
    <alternativeName>
        <fullName>CDP-diacylglycerol synthase</fullName>
        <shortName>CDS</shortName>
    </alternativeName>
    <alternativeName>
        <fullName>CDP-diglyceride pyrophosphorylase</fullName>
    </alternativeName>
    <alternativeName>
        <fullName>CDP-diglyceride synthase</fullName>
    </alternativeName>
    <alternativeName>
        <fullName>CTP:phosphatidate cytidylyltransferase</fullName>
    </alternativeName>
</protein>
<feature type="chain" id="PRO_0000090733" description="Phosphatidate cytidylyltransferase">
    <location>
        <begin position="1"/>
        <end position="305"/>
    </location>
</feature>
<feature type="transmembrane region" description="Helical" evidence="2">
    <location>
        <begin position="27"/>
        <end position="47"/>
    </location>
</feature>
<feature type="transmembrane region" description="Helical" evidence="2">
    <location>
        <begin position="67"/>
        <end position="87"/>
    </location>
</feature>
<feature type="transmembrane region" description="Helical" evidence="2">
    <location>
        <begin position="96"/>
        <end position="116"/>
    </location>
</feature>
<feature type="transmembrane region" description="Helical" evidence="2">
    <location>
        <begin position="124"/>
        <end position="144"/>
    </location>
</feature>
<feature type="transmembrane region" description="Helical" evidence="2">
    <location>
        <begin position="150"/>
        <end position="170"/>
    </location>
</feature>
<feature type="transmembrane region" description="Helical" evidence="2">
    <location>
        <begin position="202"/>
        <end position="222"/>
    </location>
</feature>
<feature type="transmembrane region" description="Helical" evidence="2">
    <location>
        <begin position="232"/>
        <end position="252"/>
    </location>
</feature>
<feature type="transmembrane region" description="Helical" evidence="2">
    <location>
        <begin position="277"/>
        <end position="297"/>
    </location>
</feature>
<accession>O84457</accession>
<proteinExistence type="inferred from homology"/>
<comment type="catalytic activity">
    <reaction>
        <text>a 1,2-diacyl-sn-glycero-3-phosphate + CTP + H(+) = a CDP-1,2-diacyl-sn-glycerol + diphosphate</text>
        <dbReference type="Rhea" id="RHEA:16229"/>
        <dbReference type="ChEBI" id="CHEBI:15378"/>
        <dbReference type="ChEBI" id="CHEBI:33019"/>
        <dbReference type="ChEBI" id="CHEBI:37563"/>
        <dbReference type="ChEBI" id="CHEBI:58332"/>
        <dbReference type="ChEBI" id="CHEBI:58608"/>
        <dbReference type="EC" id="2.7.7.41"/>
    </reaction>
</comment>
<comment type="pathway">
    <text>Phospholipid metabolism; CDP-diacylglycerol biosynthesis; CDP-diacylglycerol from sn-glycerol 3-phosphate: step 3/3.</text>
</comment>
<comment type="subcellular location">
    <subcellularLocation>
        <location evidence="1">Cell membrane</location>
        <topology evidence="1">Multi-pass membrane protein</topology>
    </subcellularLocation>
</comment>
<comment type="similarity">
    <text evidence="3">Belongs to the CDS family.</text>
</comment>
<reference key="1">
    <citation type="journal article" date="1998" name="Science">
        <title>Genome sequence of an obligate intracellular pathogen of humans: Chlamydia trachomatis.</title>
        <authorList>
            <person name="Stephens R.S."/>
            <person name="Kalman S."/>
            <person name="Lammel C.J."/>
            <person name="Fan J."/>
            <person name="Marathe R."/>
            <person name="Aravind L."/>
            <person name="Mitchell W.P."/>
            <person name="Olinger L."/>
            <person name="Tatusov R.L."/>
            <person name="Zhao Q."/>
            <person name="Koonin E.V."/>
            <person name="Davis R.W."/>
        </authorList>
    </citation>
    <scope>NUCLEOTIDE SEQUENCE [LARGE SCALE GENOMIC DNA]</scope>
    <source>
        <strain>ATCC VR-885 / DSM 19411 / UW-3/Cx</strain>
    </source>
</reference>
<evidence type="ECO:0000250" key="1"/>
<evidence type="ECO:0000255" key="2"/>
<evidence type="ECO:0000305" key="3"/>